<accession>Q564A5</accession>
<reference evidence="5 6" key="1">
    <citation type="journal article" date="2005" name="J. Biol. Chem.">
        <title>Hydralysins, a new category of beta-pore-forming toxins in cnidaria.</title>
        <authorList>
            <person name="Sher D."/>
            <person name="Fishman Y."/>
            <person name="Zhang M."/>
            <person name="Lebendiker M."/>
            <person name="Gaathon A."/>
            <person name="Mancheno J.-M."/>
            <person name="Zlotkin E."/>
        </authorList>
    </citation>
    <scope>NUCLEOTIDE SEQUENCE [MRNA]</scope>
    <scope>FUNCTION</scope>
    <scope>TOXIC DOSE</scope>
    <scope>MUTAGENESIS OF GLN-28; GLY-125 AND VAL-140</scope>
</reference>
<protein>
    <recommendedName>
        <fullName>Hydralysin-2</fullName>
    </recommendedName>
</protein>
<keyword id="KW-0204">Cytolysis</keyword>
<keyword id="KW-0354">Hemolysis</keyword>
<keyword id="KW-0528">Neurotoxin</keyword>
<keyword id="KW-0964">Secreted</keyword>
<keyword id="KW-0800">Toxin</keyword>
<evidence type="ECO:0000250" key="1"/>
<evidence type="ECO:0000250" key="2">
    <source>
        <dbReference type="UniProtKB" id="Q86LR2"/>
    </source>
</evidence>
<evidence type="ECO:0000269" key="3">
    <source>
    </source>
</evidence>
<evidence type="ECO:0000303" key="4">
    <source>
    </source>
</evidence>
<evidence type="ECO:0000305" key="5"/>
<evidence type="ECO:0000312" key="6">
    <source>
        <dbReference type="EMBL" id="AAT66173.1"/>
    </source>
</evidence>
<organism>
    <name type="scientific">Hydra viridissima</name>
    <name type="common">Green hydra</name>
    <name type="synonym">Chlorohydra viridissima</name>
    <dbReference type="NCBI Taxonomy" id="6082"/>
    <lineage>
        <taxon>Eukaryota</taxon>
        <taxon>Metazoa</taxon>
        <taxon>Cnidaria</taxon>
        <taxon>Hydrozoa</taxon>
        <taxon>Hydroidolina</taxon>
        <taxon>Anthoathecata</taxon>
        <taxon>Aplanulata</taxon>
        <taxon>Hydridae</taxon>
        <taxon>Hydra</taxon>
    </lineage>
</organism>
<name>HLYS2_HYDVD</name>
<comment type="function">
    <text evidence="3 4">Induces an immediate fast muscle contraction followed by flaccid paralysis when injected into blowfly larvae. Has strong cytolytic activity against insect Sf9 cells and human HeLa cells, weak activity against human JAR cells, and no activity against human HEK293 cells. Binds to erythrocyte membranes and has hemolytic activity, probably mediated by oligomerization and pore formation.</text>
</comment>
<comment type="subcellular location">
    <subcellularLocation>
        <location evidence="2">Secreted</location>
    </subcellularLocation>
</comment>
<comment type="toxic dose">
    <text evidence="3">PD(50) is 0.103 mg/kg by injection in blowfly larvae.</text>
</comment>
<comment type="similarity">
    <text evidence="5">Belongs to the hydralysin family.</text>
</comment>
<dbReference type="EMBL" id="AY655142">
    <property type="protein sequence ID" value="AAT66173.1"/>
    <property type="molecule type" value="mRNA"/>
</dbReference>
<dbReference type="SMR" id="Q564A5"/>
<dbReference type="GO" id="GO:0005576">
    <property type="term" value="C:extracellular region"/>
    <property type="evidence" value="ECO:0000314"/>
    <property type="project" value="UniProtKB"/>
</dbReference>
<dbReference type="GO" id="GO:0140911">
    <property type="term" value="F:pore-forming activity"/>
    <property type="evidence" value="ECO:0000314"/>
    <property type="project" value="UniProtKB"/>
</dbReference>
<dbReference type="GO" id="GO:0090729">
    <property type="term" value="F:toxin activity"/>
    <property type="evidence" value="ECO:0007669"/>
    <property type="project" value="UniProtKB-KW"/>
</dbReference>
<dbReference type="GO" id="GO:0044179">
    <property type="term" value="P:hemolysis in another organism"/>
    <property type="evidence" value="ECO:0000314"/>
    <property type="project" value="UniProtKB"/>
</dbReference>
<dbReference type="CDD" id="cd21130">
    <property type="entry name" value="parasporin-2-like_N-term"/>
    <property type="match status" value="1"/>
</dbReference>
<dbReference type="CDD" id="cd20222">
    <property type="entry name" value="PFM_parasporin-2-like"/>
    <property type="match status" value="1"/>
</dbReference>
<dbReference type="Gene3D" id="2.60.40.3040">
    <property type="match status" value="1"/>
</dbReference>
<dbReference type="Gene3D" id="2.60.40.4280">
    <property type="match status" value="1"/>
</dbReference>
<dbReference type="Gene3D" id="3.10.290.50">
    <property type="match status" value="1"/>
</dbReference>
<dbReference type="InterPro" id="IPR004991">
    <property type="entry name" value="Aerolysin-like"/>
</dbReference>
<dbReference type="Pfam" id="PF03318">
    <property type="entry name" value="ETX_MTX2"/>
    <property type="match status" value="1"/>
</dbReference>
<dbReference type="SUPFAM" id="SSF56973">
    <property type="entry name" value="Aerolisin/ETX pore-forming domain"/>
    <property type="match status" value="1"/>
</dbReference>
<gene>
    <name evidence="4" type="primary">Hln-2</name>
</gene>
<feature type="initiator methionine" description="Removed" evidence="1">
    <location>
        <position position="1"/>
    </location>
</feature>
<feature type="chain" id="PRO_0000221559" description="Hydralysin-2">
    <location>
        <begin position="2"/>
        <end position="244"/>
    </location>
</feature>
<feature type="mutagenesis site" description="No effect; when associated with L-140." evidence="3">
    <original>Q</original>
    <variation>E</variation>
    <location>
        <position position="28"/>
    </location>
</feature>
<feature type="mutagenesis site" description="Reduces paralytic and hemolytic activity. No additional effect; when associated with E-28 and L-140." evidence="3">
    <original>G</original>
    <variation>E</variation>
    <location>
        <position position="125"/>
    </location>
</feature>
<feature type="mutagenesis site" description="No effect; when associated with E-28." evidence="3">
    <original>V</original>
    <variation>L</variation>
    <location>
        <position position="140"/>
    </location>
</feature>
<proteinExistence type="evidence at protein level"/>
<sequence length="244" mass="26214">MGKELLTFSDLTWLDSSPDTVRSAFTRQYGTTPDGIALNSEGYFGYHSPPITEQYGRPCYKQTGETKITLQDLAPPTDAILGNSIARNRGDSPITLTVSVEGKWSDSTSWSTSTETGVKMSSEFGVEGAFKMGGEFSLTVSVGKSGSSSVEKTSTSSVQVTVPPRSKVVVSMVGIMKKEKVFFEVPVTVDGSFGANFPSTVQGHYFWFMDARSCLNKTSGVIKGTIDHANVFDVSVEVGPSEPL</sequence>